<accession>A9M670</accession>
<name>Y1444_BRUC2</name>
<organism>
    <name type="scientific">Brucella canis (strain ATCC 23365 / NCTC 10854 / RM-666)</name>
    <dbReference type="NCBI Taxonomy" id="483179"/>
    <lineage>
        <taxon>Bacteria</taxon>
        <taxon>Pseudomonadati</taxon>
        <taxon>Pseudomonadota</taxon>
        <taxon>Alphaproteobacteria</taxon>
        <taxon>Hyphomicrobiales</taxon>
        <taxon>Brucellaceae</taxon>
        <taxon>Brucella/Ochrobactrum group</taxon>
        <taxon>Brucella</taxon>
    </lineage>
</organism>
<gene>
    <name type="ordered locus">BCAN_A1444</name>
</gene>
<evidence type="ECO:0000255" key="1">
    <source>
        <dbReference type="HAMAP-Rule" id="MF_00761"/>
    </source>
</evidence>
<protein>
    <recommendedName>
        <fullName evidence="1">UPF0303 protein BCAN_A1444</fullName>
    </recommendedName>
</protein>
<sequence>MAQGDDNKQAIGQIIRQEQALIFPSLNENDAFSLGQRIRDIAVKDKLGIAIDISLWDRRLFFAATAGATADNTEWLRRKFNVVRRFHVSTYRLVLEQNREDRMFAPYKALDVADYALAGGGFPIRVSGAGVIGAVIVSGLPQREDHNLVVRAVAEHVGQDPVALALPAA</sequence>
<proteinExistence type="inferred from homology"/>
<reference key="1">
    <citation type="submission" date="2007-10" db="EMBL/GenBank/DDBJ databases">
        <title>Brucella canis ATCC 23365 whole genome shotgun sequencing project.</title>
        <authorList>
            <person name="Setubal J.C."/>
            <person name="Bowns C."/>
            <person name="Boyle S."/>
            <person name="Crasta O.R."/>
            <person name="Czar M.J."/>
            <person name="Dharmanolla C."/>
            <person name="Gillespie J.J."/>
            <person name="Kenyon R.W."/>
            <person name="Lu J."/>
            <person name="Mane S."/>
            <person name="Mohapatra S."/>
            <person name="Nagrani S."/>
            <person name="Purkayastha A."/>
            <person name="Rajasimha H.K."/>
            <person name="Shallom J.M."/>
            <person name="Shallom S."/>
            <person name="Shukla M."/>
            <person name="Snyder E.E."/>
            <person name="Sobral B.W."/>
            <person name="Wattam A.R."/>
            <person name="Will R."/>
            <person name="Williams K."/>
            <person name="Yoo H."/>
            <person name="Bruce D."/>
            <person name="Detter C."/>
            <person name="Munk C."/>
            <person name="Brettin T.S."/>
        </authorList>
    </citation>
    <scope>NUCLEOTIDE SEQUENCE [LARGE SCALE GENOMIC DNA]</scope>
    <source>
        <strain>ATCC 23365 / NCTC 10854 / RM-666</strain>
    </source>
</reference>
<feature type="chain" id="PRO_1000083528" description="UPF0303 protein BCAN_A1444">
    <location>
        <begin position="1"/>
        <end position="169"/>
    </location>
</feature>
<dbReference type="EMBL" id="CP000872">
    <property type="protein sequence ID" value="ABX62475.1"/>
    <property type="molecule type" value="Genomic_DNA"/>
</dbReference>
<dbReference type="RefSeq" id="WP_004690981.1">
    <property type="nucleotide sequence ID" value="NC_010103.1"/>
</dbReference>
<dbReference type="SMR" id="A9M670"/>
<dbReference type="GeneID" id="55591064"/>
<dbReference type="KEGG" id="bcs:BCAN_A1444"/>
<dbReference type="HOGENOM" id="CLU_101036_2_2_5"/>
<dbReference type="PhylomeDB" id="A9M670"/>
<dbReference type="Proteomes" id="UP000001385">
    <property type="component" value="Chromosome I"/>
</dbReference>
<dbReference type="Gene3D" id="3.30.450.150">
    <property type="entry name" value="Haem-degrading domain"/>
    <property type="match status" value="1"/>
</dbReference>
<dbReference type="HAMAP" id="MF_00761">
    <property type="entry name" value="UPF0303"/>
    <property type="match status" value="1"/>
</dbReference>
<dbReference type="InterPro" id="IPR005624">
    <property type="entry name" value="PduO/GlcC-like"/>
</dbReference>
<dbReference type="InterPro" id="IPR038084">
    <property type="entry name" value="PduO/GlcC-like_sf"/>
</dbReference>
<dbReference type="InterPro" id="IPR010371">
    <property type="entry name" value="YBR137W-like"/>
</dbReference>
<dbReference type="NCBIfam" id="NF002693">
    <property type="entry name" value="PRK02487.1-2"/>
    <property type="match status" value="1"/>
</dbReference>
<dbReference type="NCBIfam" id="NF002696">
    <property type="entry name" value="PRK02487.1-5"/>
    <property type="match status" value="1"/>
</dbReference>
<dbReference type="PANTHER" id="PTHR28255">
    <property type="match status" value="1"/>
</dbReference>
<dbReference type="PANTHER" id="PTHR28255:SF1">
    <property type="entry name" value="UPF0303 PROTEIN YBR137W"/>
    <property type="match status" value="1"/>
</dbReference>
<dbReference type="Pfam" id="PF03928">
    <property type="entry name" value="HbpS-like"/>
    <property type="match status" value="1"/>
</dbReference>
<dbReference type="PIRSF" id="PIRSF008757">
    <property type="entry name" value="UCP008757"/>
    <property type="match status" value="1"/>
</dbReference>
<dbReference type="SUPFAM" id="SSF143744">
    <property type="entry name" value="GlcG-like"/>
    <property type="match status" value="1"/>
</dbReference>
<keyword id="KW-1185">Reference proteome</keyword>
<comment type="similarity">
    <text evidence="1">Belongs to the UPF0303 family.</text>
</comment>